<keyword id="KW-0963">Cytoplasm</keyword>
<keyword id="KW-0396">Initiation factor</keyword>
<keyword id="KW-0648">Protein biosynthesis</keyword>
<keyword id="KW-1185">Reference proteome</keyword>
<sequence>MSKYSGEEFSNNGDFYDDFAHTGDPALDMEYERNYYASRMPENVKYFLMNFCQAVKEGNLYDIQNMYENTFPQISDHHFDKSSWPEETEVGALVENDKVFMILYKELYYRHIHARIPGGPKLDQRINSFFNYCDFFNLIISAPNPVMLELPDIWLWELVDEFVYQFQNFAQYRARLTDKSQEEIQQLCVNHSNVWSILCILNVLHSLVDISNIKKQLEAISGGIDPNTVSGDFGKLSFYKMLGYFSLVDLLRVHSLLGDYYQAIKVLEPIEIHKKSAYSHIPACQISTSYYVGFAYMMMRRYADAIRTFSDILLYIQRTKQLYSTRSYQNDQINKQAEQMYHLLAICLVLHPQCIDESIQQVLREKNYHDAMFKMQCGDLEVFKSFFVFACPRFVSPCPPAADAPMEDYVKDPMEHQLQVFMDEVRQQKDLPTTRSYLKLYTTLPLAKLASFIDPNANDDDVSKLLIRLLCFKHKMRNLVWSKGPSGLEGTFKSGSELDFYIDDDMIHIADTKVSHRYGDFFVRKILKFNDLNRKLKNINI</sequence>
<proteinExistence type="inferred from homology"/>
<comment type="function">
    <text evidence="1">Component of the eukaryotic translation initiation factor 3 (eIF-3) complex, which is involved in protein synthesis of a specialized repertoire of mRNAs and, together with other initiation factors, stimulates binding of mRNA and methionyl-tRNAi to the 40S ribosome. The eIF-3 complex specifically targets and initiates translation of a subset of mRNAs involved in cell proliferation.</text>
</comment>
<comment type="subunit">
    <text evidence="1">Component of the eukaryotic translation initiation factor 3 (eIF-3) complex. The eIF-3 complex interacts with pix.</text>
</comment>
<comment type="subcellular location">
    <subcellularLocation>
        <location evidence="1">Cytoplasm</location>
    </subcellularLocation>
</comment>
<comment type="similarity">
    <text evidence="1">Belongs to the eIF-3 subunit L family.</text>
</comment>
<accession>B4GR63</accession>
<reference key="1">
    <citation type="journal article" date="2007" name="Nature">
        <title>Evolution of genes and genomes on the Drosophila phylogeny.</title>
        <authorList>
            <consortium name="Drosophila 12 genomes consortium"/>
        </authorList>
    </citation>
    <scope>NUCLEOTIDE SEQUENCE [LARGE SCALE GENOMIC DNA]</scope>
    <source>
        <strain>MSH-3 / Tucson 14011-0111.49</strain>
    </source>
</reference>
<feature type="chain" id="PRO_0000364247" description="Eukaryotic translation initiation factor 3 subunit L">
    <location>
        <begin position="1"/>
        <end position="541"/>
    </location>
</feature>
<feature type="domain" description="PCI" evidence="2">
    <location>
        <begin position="308"/>
        <end position="516"/>
    </location>
</feature>
<name>EIF3L_DROPE</name>
<protein>
    <recommendedName>
        <fullName evidence="1">Eukaryotic translation initiation factor 3 subunit L</fullName>
        <shortName evidence="1">eIF3l</shortName>
    </recommendedName>
</protein>
<gene>
    <name type="ORF">GL25016</name>
</gene>
<evidence type="ECO:0000255" key="1">
    <source>
        <dbReference type="HAMAP-Rule" id="MF_03011"/>
    </source>
</evidence>
<evidence type="ECO:0000255" key="2">
    <source>
        <dbReference type="PROSITE-ProRule" id="PRU01185"/>
    </source>
</evidence>
<dbReference type="EMBL" id="CH479188">
    <property type="protein sequence ID" value="EDW40248.1"/>
    <property type="molecule type" value="Genomic_DNA"/>
</dbReference>
<dbReference type="RefSeq" id="XP_002021092.1">
    <property type="nucleotide sequence ID" value="XM_002021056.1"/>
</dbReference>
<dbReference type="SMR" id="B4GR63"/>
<dbReference type="STRING" id="7234.B4GR63"/>
<dbReference type="EnsemblMetazoa" id="FBtr0190631">
    <property type="protein sequence ID" value="FBpp0189123"/>
    <property type="gene ID" value="FBgn0162603"/>
</dbReference>
<dbReference type="GeneID" id="6596128"/>
<dbReference type="KEGG" id="dpe:6596128"/>
<dbReference type="CTD" id="51386"/>
<dbReference type="eggNOG" id="KOG3677">
    <property type="taxonomic scope" value="Eukaryota"/>
</dbReference>
<dbReference type="HOGENOM" id="CLU_029210_0_1_1"/>
<dbReference type="OMA" id="AGWFIRN"/>
<dbReference type="OrthoDB" id="15082at2759"/>
<dbReference type="PhylomeDB" id="B4GR63"/>
<dbReference type="Proteomes" id="UP000008744">
    <property type="component" value="Unassembled WGS sequence"/>
</dbReference>
<dbReference type="GO" id="GO:0016282">
    <property type="term" value="C:eukaryotic 43S preinitiation complex"/>
    <property type="evidence" value="ECO:0007669"/>
    <property type="project" value="UniProtKB-UniRule"/>
</dbReference>
<dbReference type="GO" id="GO:0033290">
    <property type="term" value="C:eukaryotic 48S preinitiation complex"/>
    <property type="evidence" value="ECO:0007669"/>
    <property type="project" value="UniProtKB-UniRule"/>
</dbReference>
<dbReference type="GO" id="GO:0005852">
    <property type="term" value="C:eukaryotic translation initiation factor 3 complex"/>
    <property type="evidence" value="ECO:0007669"/>
    <property type="project" value="UniProtKB-UniRule"/>
</dbReference>
<dbReference type="GO" id="GO:0003743">
    <property type="term" value="F:translation initiation factor activity"/>
    <property type="evidence" value="ECO:0007669"/>
    <property type="project" value="UniProtKB-UniRule"/>
</dbReference>
<dbReference type="GO" id="GO:0001732">
    <property type="term" value="P:formation of cytoplasmic translation initiation complex"/>
    <property type="evidence" value="ECO:0007669"/>
    <property type="project" value="UniProtKB-UniRule"/>
</dbReference>
<dbReference type="HAMAP" id="MF_03011">
    <property type="entry name" value="eIF3l"/>
    <property type="match status" value="1"/>
</dbReference>
<dbReference type="InterPro" id="IPR019382">
    <property type="entry name" value="eIF3l"/>
</dbReference>
<dbReference type="InterPro" id="IPR000717">
    <property type="entry name" value="PCI_dom"/>
</dbReference>
<dbReference type="InterPro" id="IPR011990">
    <property type="entry name" value="TPR-like_helical_dom_sf"/>
</dbReference>
<dbReference type="PANTHER" id="PTHR13242">
    <property type="entry name" value="EUKARYOTIC TRANSLATION INITIATION FACTOR 3"/>
    <property type="match status" value="1"/>
</dbReference>
<dbReference type="PANTHER" id="PTHR13242:SF0">
    <property type="entry name" value="EUKARYOTIC TRANSLATION INITIATION FACTOR 3 SUBUNIT L"/>
    <property type="match status" value="1"/>
</dbReference>
<dbReference type="Pfam" id="PF10255">
    <property type="entry name" value="Paf67"/>
    <property type="match status" value="1"/>
</dbReference>
<dbReference type="SUPFAM" id="SSF48452">
    <property type="entry name" value="TPR-like"/>
    <property type="match status" value="1"/>
</dbReference>
<dbReference type="PROSITE" id="PS50250">
    <property type="entry name" value="PCI"/>
    <property type="match status" value="1"/>
</dbReference>
<organism>
    <name type="scientific">Drosophila persimilis</name>
    <name type="common">Fruit fly</name>
    <dbReference type="NCBI Taxonomy" id="7234"/>
    <lineage>
        <taxon>Eukaryota</taxon>
        <taxon>Metazoa</taxon>
        <taxon>Ecdysozoa</taxon>
        <taxon>Arthropoda</taxon>
        <taxon>Hexapoda</taxon>
        <taxon>Insecta</taxon>
        <taxon>Pterygota</taxon>
        <taxon>Neoptera</taxon>
        <taxon>Endopterygota</taxon>
        <taxon>Diptera</taxon>
        <taxon>Brachycera</taxon>
        <taxon>Muscomorpha</taxon>
        <taxon>Ephydroidea</taxon>
        <taxon>Drosophilidae</taxon>
        <taxon>Drosophila</taxon>
        <taxon>Sophophora</taxon>
    </lineage>
</organism>